<gene>
    <name evidence="6" type="primary">ssh7b</name>
    <name evidence="7" type="ORF">J5U23_00939</name>
</gene>
<keyword id="KW-0963">Cytoplasm</keyword>
<keyword id="KW-0903">Direct protein sequencing</keyword>
<keyword id="KW-0238">DNA-binding</keyword>
<keyword id="KW-0488">Methylation</keyword>
<proteinExistence type="evidence at protein level"/>
<accession>O59632</accession>
<accession>A0A8F5BMK9</accession>
<organism>
    <name type="scientific">Saccharolobus shibatae (strain ATCC 51178 / DSM 5389 / JCM 8931 / NBRC 15437 / B12)</name>
    <name type="common">Sulfolobus shibatae</name>
    <dbReference type="NCBI Taxonomy" id="523848"/>
    <lineage>
        <taxon>Archaea</taxon>
        <taxon>Thermoproteota</taxon>
        <taxon>Thermoprotei</taxon>
        <taxon>Sulfolobales</taxon>
        <taxon>Sulfolobaceae</taxon>
        <taxon>Saccharolobus</taxon>
    </lineage>
</organism>
<evidence type="ECO:0000269" key="1">
    <source>
    </source>
</evidence>
<evidence type="ECO:0000269" key="2">
    <source>
    </source>
</evidence>
<evidence type="ECO:0000303" key="3">
    <source>
    </source>
</evidence>
<evidence type="ECO:0000305" key="4"/>
<evidence type="ECO:0000305" key="5">
    <source>
    </source>
</evidence>
<evidence type="ECO:0000312" key="6">
    <source>
        <dbReference type="EMBL" id="BAA28275.1"/>
    </source>
</evidence>
<evidence type="ECO:0000312" key="7">
    <source>
        <dbReference type="EMBL" id="QXJ28071.1"/>
    </source>
</evidence>
<feature type="initiator methionine" description="Removed" evidence="2">
    <location>
        <position position="1"/>
    </location>
</feature>
<feature type="chain" id="PRO_0000213079" description="DNA-binding protein 7b">
    <location>
        <begin position="2"/>
        <end position="64"/>
    </location>
</feature>
<feature type="modified residue" description="N6-methyllysine" evidence="5">
    <location>
        <position position="5"/>
    </location>
</feature>
<feature type="modified residue" description="N6-methyllysine" evidence="5">
    <location>
        <position position="7"/>
    </location>
</feature>
<protein>
    <recommendedName>
        <fullName evidence="4">DNA-binding protein 7b</fullName>
    </recommendedName>
    <alternativeName>
        <fullName>7 kDa DNA-binding protein B</fullName>
    </alternativeName>
    <alternativeName>
        <fullName evidence="3">Ssh7b</fullName>
    </alternativeName>
</protein>
<dbReference type="EMBL" id="AB013923">
    <property type="protein sequence ID" value="BAA28275.1"/>
    <property type="molecule type" value="Genomic_DNA"/>
</dbReference>
<dbReference type="EMBL" id="CP077717">
    <property type="protein sequence ID" value="QXJ28071.1"/>
    <property type="molecule type" value="Genomic_DNA"/>
</dbReference>
<dbReference type="RefSeq" id="WP_012712662.1">
    <property type="nucleotide sequence ID" value="NZ_CP077717.1"/>
</dbReference>
<dbReference type="SMR" id="O59632"/>
<dbReference type="iPTMnet" id="O59632"/>
<dbReference type="GeneID" id="84063018"/>
<dbReference type="KEGG" id="sshi:J5U23_00939"/>
<dbReference type="OrthoDB" id="33867at2157"/>
<dbReference type="Proteomes" id="UP000694018">
    <property type="component" value="Chromosome"/>
</dbReference>
<dbReference type="GO" id="GO:0005737">
    <property type="term" value="C:cytoplasm"/>
    <property type="evidence" value="ECO:0007669"/>
    <property type="project" value="UniProtKB-SubCell"/>
</dbReference>
<dbReference type="GO" id="GO:0003677">
    <property type="term" value="F:DNA binding"/>
    <property type="evidence" value="ECO:0007669"/>
    <property type="project" value="UniProtKB-KW"/>
</dbReference>
<dbReference type="GO" id="GO:0004521">
    <property type="term" value="F:RNA endonuclease activity"/>
    <property type="evidence" value="ECO:0007669"/>
    <property type="project" value="InterPro"/>
</dbReference>
<dbReference type="Gene3D" id="2.40.50.40">
    <property type="match status" value="1"/>
</dbReference>
<dbReference type="InterPro" id="IPR016197">
    <property type="entry name" value="Chromo-like_dom_sf"/>
</dbReference>
<dbReference type="InterPro" id="IPR003212">
    <property type="entry name" value="DNA-bd_7a-e_arc"/>
</dbReference>
<dbReference type="NCBIfam" id="NF045555">
    <property type="entry name" value="Sul7d"/>
    <property type="match status" value="1"/>
</dbReference>
<dbReference type="Pfam" id="PF02294">
    <property type="entry name" value="7kD_DNA_binding"/>
    <property type="match status" value="1"/>
</dbReference>
<dbReference type="PIRSF" id="PIRSF036912">
    <property type="entry name" value="Sac7"/>
    <property type="match status" value="1"/>
</dbReference>
<dbReference type="SUPFAM" id="SSF54160">
    <property type="entry name" value="Chromo domain-like"/>
    <property type="match status" value="1"/>
</dbReference>
<name>DN7B_SACSH</name>
<sequence length="64" mass="7296">MVTVKFKYKGEEKEVDTSKIKKVWRVGKMISFTYDEGGGKTGRGAVSEKDAPKELLQMLEKQKK</sequence>
<comment type="function">
    <text evidence="2 5">Can constrain negative DNA supercoils (PubMed:9573212). May be involved in maintaining the integrity of the genome at high temperature (Probable).</text>
</comment>
<comment type="biophysicochemical properties">
    <phDependence>
        <text evidence="1">Highly stable from pH 0 to pH 12.</text>
    </phDependence>
    <temperatureDependence>
        <text evidence="1">Hyperthermostable.</text>
    </temperatureDependence>
</comment>
<comment type="subunit">
    <text evidence="1">Monomer.</text>
</comment>
<comment type="subcellular location">
    <subcellularLocation>
        <location evidence="1">Cytoplasm</location>
    </subcellularLocation>
</comment>
<comment type="PTM">
    <text evidence="5">Lys-5 and Lys-7 may be methylated.</text>
</comment>
<comment type="similarity">
    <text evidence="4">Belongs to the 7 kDa DNA-binding/endoribonuclease P2 family.</text>
</comment>
<reference key="1">
    <citation type="journal article" date="1998" name="J. Bacteriol.">
        <title>Small abundant DNA binding proteins from the thermoacidophilic archaeon Sulfolobus shibatae constrain negative DNA supercoils.</title>
        <authorList>
            <person name="Mai V.Q."/>
            <person name="Chen X."/>
            <person name="Hong R."/>
            <person name="Huang L."/>
        </authorList>
    </citation>
    <scope>NUCLEOTIDE SEQUENCE [GENOMIC DNA]</scope>
    <scope>PROTEIN SEQUENCE OF 2-12</scope>
    <scope>FUNCTION</scope>
    <scope>METHYLATION AT LYS-5 AND LYS-7</scope>
    <scope>DNA-BINDING</scope>
    <source>
        <strain>ATCC 51178 / DSM 5389 / JCM 8931 / NBRC 15437 / B12</strain>
    </source>
</reference>
<reference evidence="7" key="2">
    <citation type="journal article" date="2021" name="Environ. Microbiol.">
        <title>New insights into the diversity and evolution of the archaeal mobilome from three complete genomes of Saccharolobus shibatae.</title>
        <authorList>
            <person name="Medvedeva S."/>
            <person name="Brandt D."/>
            <person name="Cvirkaite-Krupovic V."/>
            <person name="Liu Y."/>
            <person name="Severinov K."/>
            <person name="Ishino S."/>
            <person name="Ishino Y."/>
            <person name="Prangishvili D."/>
            <person name="Kalinowski J."/>
            <person name="Krupovic M."/>
        </authorList>
    </citation>
    <scope>NUCLEOTIDE SEQUENCE [LARGE SCALE GENOMIC DNA]</scope>
    <source>
        <strain>ATCC 51178 / DSM 5389 / JCM 8931 / NBRC 15437 / B12</strain>
    </source>
</reference>
<reference key="3">
    <citation type="journal article" date="2016" name="Sci. Rep.">
        <title>The archaeal '7 kDa DNA-binding' proteins: extended characterization of an old gifted family.</title>
        <authorList>
            <person name="Kalichuk V."/>
            <person name="Behar G."/>
            <person name="Renodon-Corniere A."/>
            <person name="Danovski G."/>
            <person name="Obal G."/>
            <person name="Barbet J."/>
            <person name="Mouratou B."/>
            <person name="Pecorari F."/>
        </authorList>
    </citation>
    <scope>DNA-BINDING</scope>
    <scope>BIOPHYSICOCHEMICAL PROPERTIES</scope>
    <scope>SUBUNIT</scope>
    <scope>SUBCELLULAR LOCATION</scope>
    <scope>NOMENCLATURE</scope>
</reference>